<organism>
    <name type="scientific">Dehalococcoides mccartyi (strain ATCC BAA-2100 / JCM 16839 / KCTC 5957 / BAV1)</name>
    <dbReference type="NCBI Taxonomy" id="216389"/>
    <lineage>
        <taxon>Bacteria</taxon>
        <taxon>Bacillati</taxon>
        <taxon>Chloroflexota</taxon>
        <taxon>Dehalococcoidia</taxon>
        <taxon>Dehalococcoidales</taxon>
        <taxon>Dehalococcoidaceae</taxon>
        <taxon>Dehalococcoides</taxon>
    </lineage>
</organism>
<gene>
    <name evidence="1" type="primary">uvrC</name>
    <name type="ordered locus">DehaBAV1_1026</name>
</gene>
<reference key="1">
    <citation type="submission" date="2007-05" db="EMBL/GenBank/DDBJ databases">
        <title>Complete sequence of Dehalococcoides sp. BAV1.</title>
        <authorList>
            <consortium name="US DOE Joint Genome Institute"/>
            <person name="Copeland A."/>
            <person name="Lucas S."/>
            <person name="Lapidus A."/>
            <person name="Barry K."/>
            <person name="Detter J.C."/>
            <person name="Glavina del Rio T."/>
            <person name="Hammon N."/>
            <person name="Israni S."/>
            <person name="Pitluck S."/>
            <person name="Lowry S."/>
            <person name="Clum A."/>
            <person name="Schmutz J."/>
            <person name="Larimer F."/>
            <person name="Land M."/>
            <person name="Hauser L."/>
            <person name="Kyrpides N."/>
            <person name="Kim E."/>
            <person name="Ritalahti K.M."/>
            <person name="Loeffler F."/>
            <person name="Richardson P."/>
        </authorList>
    </citation>
    <scope>NUCLEOTIDE SEQUENCE [LARGE SCALE GENOMIC DNA]</scope>
    <source>
        <strain>ATCC BAA-2100 / JCM 16839 / KCTC 5957 / BAV1</strain>
    </source>
</reference>
<dbReference type="EMBL" id="CP000688">
    <property type="protein sequence ID" value="ABQ17606.1"/>
    <property type="molecule type" value="Genomic_DNA"/>
</dbReference>
<dbReference type="SMR" id="A5FQB7"/>
<dbReference type="KEGG" id="deb:DehaBAV1_1026"/>
<dbReference type="PATRIC" id="fig|216389.18.peg.1081"/>
<dbReference type="HOGENOM" id="CLU_014841_3_2_0"/>
<dbReference type="GO" id="GO:0005737">
    <property type="term" value="C:cytoplasm"/>
    <property type="evidence" value="ECO:0007669"/>
    <property type="project" value="UniProtKB-SubCell"/>
</dbReference>
<dbReference type="GO" id="GO:0009380">
    <property type="term" value="C:excinuclease repair complex"/>
    <property type="evidence" value="ECO:0007669"/>
    <property type="project" value="InterPro"/>
</dbReference>
<dbReference type="GO" id="GO:0003677">
    <property type="term" value="F:DNA binding"/>
    <property type="evidence" value="ECO:0007669"/>
    <property type="project" value="UniProtKB-UniRule"/>
</dbReference>
<dbReference type="GO" id="GO:0009381">
    <property type="term" value="F:excinuclease ABC activity"/>
    <property type="evidence" value="ECO:0007669"/>
    <property type="project" value="UniProtKB-UniRule"/>
</dbReference>
<dbReference type="GO" id="GO:0006289">
    <property type="term" value="P:nucleotide-excision repair"/>
    <property type="evidence" value="ECO:0007669"/>
    <property type="project" value="UniProtKB-UniRule"/>
</dbReference>
<dbReference type="GO" id="GO:0009432">
    <property type="term" value="P:SOS response"/>
    <property type="evidence" value="ECO:0007669"/>
    <property type="project" value="UniProtKB-UniRule"/>
</dbReference>
<dbReference type="CDD" id="cd10434">
    <property type="entry name" value="GIY-YIG_UvrC_Cho"/>
    <property type="match status" value="1"/>
</dbReference>
<dbReference type="FunFam" id="3.40.1440.10:FF:000001">
    <property type="entry name" value="UvrABC system protein C"/>
    <property type="match status" value="1"/>
</dbReference>
<dbReference type="Gene3D" id="1.10.150.20">
    <property type="entry name" value="5' to 3' exonuclease, C-terminal subdomain"/>
    <property type="match status" value="1"/>
</dbReference>
<dbReference type="Gene3D" id="3.40.1440.10">
    <property type="entry name" value="GIY-YIG endonuclease"/>
    <property type="match status" value="1"/>
</dbReference>
<dbReference type="Gene3D" id="3.30.420.340">
    <property type="entry name" value="UvrC, RNAse H endonuclease domain"/>
    <property type="match status" value="1"/>
</dbReference>
<dbReference type="HAMAP" id="MF_00203">
    <property type="entry name" value="UvrC"/>
    <property type="match status" value="1"/>
</dbReference>
<dbReference type="InterPro" id="IPR000305">
    <property type="entry name" value="GIY-YIG_endonuc"/>
</dbReference>
<dbReference type="InterPro" id="IPR035901">
    <property type="entry name" value="GIY-YIG_endonuc_sf"/>
</dbReference>
<dbReference type="InterPro" id="IPR047296">
    <property type="entry name" value="GIY-YIG_UvrC_Cho"/>
</dbReference>
<dbReference type="InterPro" id="IPR010994">
    <property type="entry name" value="RuvA_2-like"/>
</dbReference>
<dbReference type="InterPro" id="IPR001943">
    <property type="entry name" value="UVR_dom"/>
</dbReference>
<dbReference type="InterPro" id="IPR036876">
    <property type="entry name" value="UVR_dom_sf"/>
</dbReference>
<dbReference type="InterPro" id="IPR050066">
    <property type="entry name" value="UvrABC_protein_C"/>
</dbReference>
<dbReference type="InterPro" id="IPR004791">
    <property type="entry name" value="UvrC"/>
</dbReference>
<dbReference type="InterPro" id="IPR001162">
    <property type="entry name" value="UvrC_RNase_H_dom"/>
</dbReference>
<dbReference type="InterPro" id="IPR038476">
    <property type="entry name" value="UvrC_RNase_H_dom_sf"/>
</dbReference>
<dbReference type="NCBIfam" id="NF001824">
    <property type="entry name" value="PRK00558.1-5"/>
    <property type="match status" value="1"/>
</dbReference>
<dbReference type="NCBIfam" id="TIGR00194">
    <property type="entry name" value="uvrC"/>
    <property type="match status" value="1"/>
</dbReference>
<dbReference type="PANTHER" id="PTHR30562:SF1">
    <property type="entry name" value="UVRABC SYSTEM PROTEIN C"/>
    <property type="match status" value="1"/>
</dbReference>
<dbReference type="PANTHER" id="PTHR30562">
    <property type="entry name" value="UVRC/OXIDOREDUCTASE"/>
    <property type="match status" value="1"/>
</dbReference>
<dbReference type="Pfam" id="PF01541">
    <property type="entry name" value="GIY-YIG"/>
    <property type="match status" value="1"/>
</dbReference>
<dbReference type="Pfam" id="PF14520">
    <property type="entry name" value="HHH_5"/>
    <property type="match status" value="1"/>
</dbReference>
<dbReference type="Pfam" id="PF02151">
    <property type="entry name" value="UVR"/>
    <property type="match status" value="1"/>
</dbReference>
<dbReference type="Pfam" id="PF22920">
    <property type="entry name" value="UvrC_RNaseH"/>
    <property type="match status" value="1"/>
</dbReference>
<dbReference type="Pfam" id="PF08459">
    <property type="entry name" value="UvrC_RNaseH_dom"/>
    <property type="match status" value="1"/>
</dbReference>
<dbReference type="SMART" id="SM00465">
    <property type="entry name" value="GIYc"/>
    <property type="match status" value="1"/>
</dbReference>
<dbReference type="SUPFAM" id="SSF46600">
    <property type="entry name" value="C-terminal UvrC-binding domain of UvrB"/>
    <property type="match status" value="1"/>
</dbReference>
<dbReference type="SUPFAM" id="SSF82771">
    <property type="entry name" value="GIY-YIG endonuclease"/>
    <property type="match status" value="1"/>
</dbReference>
<dbReference type="SUPFAM" id="SSF47781">
    <property type="entry name" value="RuvA domain 2-like"/>
    <property type="match status" value="1"/>
</dbReference>
<dbReference type="PROSITE" id="PS50164">
    <property type="entry name" value="GIY_YIG"/>
    <property type="match status" value="1"/>
</dbReference>
<dbReference type="PROSITE" id="PS50151">
    <property type="entry name" value="UVR"/>
    <property type="match status" value="1"/>
</dbReference>
<dbReference type="PROSITE" id="PS50165">
    <property type="entry name" value="UVRC"/>
    <property type="match status" value="1"/>
</dbReference>
<protein>
    <recommendedName>
        <fullName evidence="1">UvrABC system protein C</fullName>
        <shortName evidence="1">Protein UvrC</shortName>
    </recommendedName>
    <alternativeName>
        <fullName evidence="1">Excinuclease ABC subunit C</fullName>
    </alternativeName>
</protein>
<proteinExistence type="inferred from homology"/>
<feature type="chain" id="PRO_1000077779" description="UvrABC system protein C">
    <location>
        <begin position="1"/>
        <end position="607"/>
    </location>
</feature>
<feature type="domain" description="GIY-YIG" evidence="1">
    <location>
        <begin position="15"/>
        <end position="94"/>
    </location>
</feature>
<feature type="domain" description="UVR" evidence="1">
    <location>
        <begin position="204"/>
        <end position="239"/>
    </location>
</feature>
<keyword id="KW-0963">Cytoplasm</keyword>
<keyword id="KW-0227">DNA damage</keyword>
<keyword id="KW-0228">DNA excision</keyword>
<keyword id="KW-0234">DNA repair</keyword>
<keyword id="KW-0267">Excision nuclease</keyword>
<keyword id="KW-0742">SOS response</keyword>
<name>UVRC_DEHMB</name>
<accession>A5FQB7</accession>
<sequence>MPNETLQNQIASLPENPGVYLMKNAQGEIIYVGKAAVLKDRVKSYFVPPSRLTPKTCQLVSQINELEYLITGSEQEALILELNLIKRHRPYFNVRLKDDKGFPYLKITLNEKWPRIYITRSMADDGGRYFGPFANTRSVRHTLQVLKELFRFRSCNRTEPEKRSRPCLEYDIHQCLSPCTGKISKSDYDHLISQAILFLEGKQDQVLKLLIRLMNEASARLDYETAALRRDQIASIKEVIEGQQLAARVTGEQDAIAFAQEGDLSMVQVFFIRRGKLIGRESFCLQGTREEKPGDILSEFAKQFYHSSTQIPPKIVTQYPVSDREILEKWLSQRRGDKVHITAGLRGQPKELINIVAENAREQLKQARIKNLSSSVTLTDALAELQTALGLSLPPQRIEGYDISNIQGTNAVGSMVVFENGKPQKAHYRRFRIKTVKGADDFSMLKEVISRRFGRVHREDAGESFARLPSLMLIDGGKGQLSSVKETLDKLGLEGQAVIGLAKEFEEIYLPHKSEPIRLAANSPALQLLQRVRDEAHRFALGYHLHIRQKSGLTSALDGIPGVGPSRRRLLIKTFGSVAGIRQASFEKLSQVKGINQALALSIKELL</sequence>
<comment type="function">
    <text evidence="1">The UvrABC repair system catalyzes the recognition and processing of DNA lesions. UvrC both incises the 5' and 3' sides of the lesion. The N-terminal half is responsible for the 3' incision and the C-terminal half is responsible for the 5' incision.</text>
</comment>
<comment type="subunit">
    <text evidence="1">Interacts with UvrB in an incision complex.</text>
</comment>
<comment type="subcellular location">
    <subcellularLocation>
        <location evidence="1">Cytoplasm</location>
    </subcellularLocation>
</comment>
<comment type="similarity">
    <text evidence="1">Belongs to the UvrC family.</text>
</comment>
<evidence type="ECO:0000255" key="1">
    <source>
        <dbReference type="HAMAP-Rule" id="MF_00203"/>
    </source>
</evidence>